<reference key="1">
    <citation type="submission" date="2006-07" db="EMBL/GenBank/DDBJ databases">
        <title>NISC comparative sequencing initiative.</title>
        <authorList>
            <person name="Antonellis A."/>
            <person name="Ayele K."/>
            <person name="Benjamin B."/>
            <person name="Blakesley R.W."/>
            <person name="Boakye A."/>
            <person name="Bouffard G.G."/>
            <person name="Brinkley C."/>
            <person name="Brooks S."/>
            <person name="Chu G."/>
            <person name="Coleman H."/>
            <person name="Engle J."/>
            <person name="Gestole M."/>
            <person name="Greene A."/>
            <person name="Guan X."/>
            <person name="Gupta J."/>
            <person name="Haghighi P."/>
            <person name="Han J."/>
            <person name="Hansen N."/>
            <person name="Ho S.-L."/>
            <person name="Hu P."/>
            <person name="Hunter G."/>
            <person name="Hurle B."/>
            <person name="Idol J.R."/>
            <person name="Kwong P."/>
            <person name="Laric P."/>
            <person name="Larson S."/>
            <person name="Lee-Lin S.-Q."/>
            <person name="Legaspi R."/>
            <person name="Madden M."/>
            <person name="Maduro Q.L."/>
            <person name="Maduro V.B."/>
            <person name="Margulies E.H."/>
            <person name="Masiello C."/>
            <person name="Maskeri B."/>
            <person name="McDowell J."/>
            <person name="Mojidi H.A."/>
            <person name="Mullikin J.C."/>
            <person name="Oestreicher J.S."/>
            <person name="Park M."/>
            <person name="Portnoy M.E."/>
            <person name="Prasad A."/>
            <person name="Puri O."/>
            <person name="Reddix-Dugue N."/>
            <person name="Schandler K."/>
            <person name="Schueler M.G."/>
            <person name="Sison C."/>
            <person name="Stantripop S."/>
            <person name="Stephen E."/>
            <person name="Taye A."/>
            <person name="Thomas J.W."/>
            <person name="Thomas P.J."/>
            <person name="Tsipouri V."/>
            <person name="Ung L."/>
            <person name="Vogt J.L."/>
            <person name="Wetherby K.D."/>
            <person name="Young A."/>
            <person name="Green E.D."/>
        </authorList>
    </citation>
    <scope>NUCLEOTIDE SEQUENCE [LARGE SCALE GENOMIC DNA]</scope>
</reference>
<keyword id="KW-0965">Cell junction</keyword>
<keyword id="KW-0963">Cytoplasm</keyword>
<keyword id="KW-0440">LIM domain</keyword>
<keyword id="KW-0479">Metal-binding</keyword>
<keyword id="KW-1185">Reference proteome</keyword>
<keyword id="KW-0677">Repeat</keyword>
<keyword id="KW-0862">Zinc</keyword>
<feature type="chain" id="PRO_0000250460" description="Testin">
    <location>
        <begin position="1"/>
        <end position="421"/>
    </location>
</feature>
<feature type="domain" description="PET" evidence="3">
    <location>
        <begin position="92"/>
        <end position="199"/>
    </location>
</feature>
<feature type="domain" description="LIM zinc-binding 1" evidence="2">
    <location>
        <begin position="234"/>
        <end position="297"/>
    </location>
</feature>
<feature type="domain" description="LIM zinc-binding 2" evidence="2">
    <location>
        <begin position="299"/>
        <end position="359"/>
    </location>
</feature>
<feature type="domain" description="LIM zinc-binding 3" evidence="2">
    <location>
        <begin position="362"/>
        <end position="421"/>
    </location>
</feature>
<accession>Q108U9</accession>
<dbReference type="EMBL" id="DP000087">
    <property type="protein sequence ID" value="ABG66643.1"/>
    <property type="molecule type" value="Genomic_DNA"/>
</dbReference>
<dbReference type="RefSeq" id="XP_003407274.2">
    <property type="nucleotide sequence ID" value="XM_003407226.4"/>
</dbReference>
<dbReference type="SMR" id="Q108U9"/>
<dbReference type="FunCoup" id="Q108U9">
    <property type="interactions" value="108"/>
</dbReference>
<dbReference type="STRING" id="9785.ENSLAFP00000014481"/>
<dbReference type="GeneID" id="100655430"/>
<dbReference type="KEGG" id="lav:100655430"/>
<dbReference type="CTD" id="26136"/>
<dbReference type="eggNOG" id="KOG1704">
    <property type="taxonomic scope" value="Eukaryota"/>
</dbReference>
<dbReference type="InParanoid" id="Q108U9"/>
<dbReference type="OrthoDB" id="10069167at2759"/>
<dbReference type="Proteomes" id="UP000007646">
    <property type="component" value="Unassembled WGS sequence"/>
</dbReference>
<dbReference type="GO" id="GO:0005737">
    <property type="term" value="C:cytoplasm"/>
    <property type="evidence" value="ECO:0000250"/>
    <property type="project" value="UniProtKB"/>
</dbReference>
<dbReference type="GO" id="GO:0005925">
    <property type="term" value="C:focal adhesion"/>
    <property type="evidence" value="ECO:0007669"/>
    <property type="project" value="UniProtKB-SubCell"/>
</dbReference>
<dbReference type="GO" id="GO:0008270">
    <property type="term" value="F:zinc ion binding"/>
    <property type="evidence" value="ECO:0000250"/>
    <property type="project" value="UniProtKB"/>
</dbReference>
<dbReference type="GO" id="GO:0008285">
    <property type="term" value="P:negative regulation of cell population proliferation"/>
    <property type="evidence" value="ECO:0000250"/>
    <property type="project" value="UniProtKB"/>
</dbReference>
<dbReference type="CDD" id="cd09413">
    <property type="entry name" value="LIM1_Testin"/>
    <property type="match status" value="1"/>
</dbReference>
<dbReference type="CDD" id="cd09416">
    <property type="entry name" value="LIM2_Testin"/>
    <property type="match status" value="1"/>
</dbReference>
<dbReference type="CDD" id="cd09419">
    <property type="entry name" value="LIM3_Testin"/>
    <property type="match status" value="1"/>
</dbReference>
<dbReference type="CDD" id="cd09829">
    <property type="entry name" value="PET_testin"/>
    <property type="match status" value="1"/>
</dbReference>
<dbReference type="FunFam" id="2.10.110.10:FF:000061">
    <property type="entry name" value="Testin"/>
    <property type="match status" value="1"/>
</dbReference>
<dbReference type="FunFam" id="2.10.110.10:FF:000065">
    <property type="entry name" value="Testin"/>
    <property type="match status" value="1"/>
</dbReference>
<dbReference type="FunFam" id="2.10.110.10:FF:000005">
    <property type="entry name" value="Testin isoform 1"/>
    <property type="match status" value="1"/>
</dbReference>
<dbReference type="Gene3D" id="2.10.110.10">
    <property type="entry name" value="Cysteine Rich Protein"/>
    <property type="match status" value="3"/>
</dbReference>
<dbReference type="InterPro" id="IPR034958">
    <property type="entry name" value="LIM1_Testin"/>
</dbReference>
<dbReference type="InterPro" id="IPR034959">
    <property type="entry name" value="LIM2_Testin"/>
</dbReference>
<dbReference type="InterPro" id="IPR034960">
    <property type="entry name" value="LIM3_Testin"/>
</dbReference>
<dbReference type="InterPro" id="IPR010442">
    <property type="entry name" value="PET_domain"/>
</dbReference>
<dbReference type="InterPro" id="IPR033724">
    <property type="entry name" value="PET_testin"/>
</dbReference>
<dbReference type="InterPro" id="IPR047120">
    <property type="entry name" value="Pk/Esn/Tes"/>
</dbReference>
<dbReference type="InterPro" id="IPR001781">
    <property type="entry name" value="Znf_LIM"/>
</dbReference>
<dbReference type="PANTHER" id="PTHR24211">
    <property type="entry name" value="LIM DOMAIN-CONTAINING PROTEIN"/>
    <property type="match status" value="1"/>
</dbReference>
<dbReference type="PANTHER" id="PTHR24211:SF1">
    <property type="entry name" value="TESTIN"/>
    <property type="match status" value="1"/>
</dbReference>
<dbReference type="Pfam" id="PF00412">
    <property type="entry name" value="LIM"/>
    <property type="match status" value="3"/>
</dbReference>
<dbReference type="Pfam" id="PF06297">
    <property type="entry name" value="PET"/>
    <property type="match status" value="1"/>
</dbReference>
<dbReference type="SMART" id="SM00132">
    <property type="entry name" value="LIM"/>
    <property type="match status" value="3"/>
</dbReference>
<dbReference type="SUPFAM" id="SSF57716">
    <property type="entry name" value="Glucocorticoid receptor-like (DNA-binding domain)"/>
    <property type="match status" value="2"/>
</dbReference>
<dbReference type="PROSITE" id="PS00478">
    <property type="entry name" value="LIM_DOMAIN_1"/>
    <property type="match status" value="2"/>
</dbReference>
<dbReference type="PROSITE" id="PS50023">
    <property type="entry name" value="LIM_DOMAIN_2"/>
    <property type="match status" value="3"/>
</dbReference>
<dbReference type="PROSITE" id="PS51303">
    <property type="entry name" value="PET"/>
    <property type="match status" value="1"/>
</dbReference>
<evidence type="ECO:0000250" key="1"/>
<evidence type="ECO:0000255" key="2">
    <source>
        <dbReference type="PROSITE-ProRule" id="PRU00125"/>
    </source>
</evidence>
<evidence type="ECO:0000255" key="3">
    <source>
        <dbReference type="PROSITE-ProRule" id="PRU00636"/>
    </source>
</evidence>
<evidence type="ECO:0000305" key="4"/>
<proteinExistence type="inferred from homology"/>
<name>TES_LOXAF</name>
<organism>
    <name type="scientific">Loxodonta africana</name>
    <name type="common">African elephant</name>
    <dbReference type="NCBI Taxonomy" id="9785"/>
    <lineage>
        <taxon>Eukaryota</taxon>
        <taxon>Metazoa</taxon>
        <taxon>Chordata</taxon>
        <taxon>Craniata</taxon>
        <taxon>Vertebrata</taxon>
        <taxon>Euteleostomi</taxon>
        <taxon>Mammalia</taxon>
        <taxon>Eutheria</taxon>
        <taxon>Afrotheria</taxon>
        <taxon>Proboscidea</taxon>
        <taxon>Elephantidae</taxon>
        <taxon>Loxodonta</taxon>
    </lineage>
</organism>
<protein>
    <recommendedName>
        <fullName>Testin</fullName>
    </recommendedName>
</protein>
<gene>
    <name type="primary">TES</name>
</gene>
<sequence length="421" mass="47847">MDLEARVKKMGLGHEQGFGAPCLKCKEKCEGFELHFWRKICRNCKCGQEEHDVLLSNEEDRKVGKLFEDTKYTTLIAKLKSDGIPMYKRNVMILTNPVAAKKNISINTVTYEWAPPVHNQALARQYMQMLPKEKQPVAGSEGAQYRKKQLAKQLPAHDQDPSKCHELTPREVKEMEQFVKKYKNEALGVGDVKLPQEMDTQGPNRIYIPGGDRSTAAAVGAMEDKSAEQKGTQYSCYCCKLSMKEGDPAVYAERAGYDKLWHPACFVCSACSELLVDMIYFWKNGKLYCGRHYCDSEKPRCAGCDELIFSNEYTQAENQNWHLKHFCCFDCDNILAGEIYVMVNDKPVCKPCYVKNHAVVCQGCHNAIDPEVQRVTYNNFSWHASTECFLCSCCSKCLIGQKFMPVEGMVFCSVECKKMMS</sequence>
<comment type="function">
    <text evidence="1">Scaffold protein that may play a role in cell adhesion, cell spreading and in the reorganization of the actin cytoskeleton. Plays a role in the regulation of cell proliferation. May act as a tumor suppressor (By similarity).</text>
</comment>
<comment type="subunit">
    <text evidence="1">Interacts via LIM domain 1 with ZYX. Interacts (via LIM domain 3) with ENAH and VASP. Interacts with ALKBH4, talin, actin, alpha-actinin, GRIP1 and PXN (By similarity). Interacts (via LIM domain 2) with ACTL7A (via N-terminus). Heterodimer with ACTL7A; the heterodimer interacts with ENAH to form a heterotrimer (By similarity).</text>
</comment>
<comment type="subcellular location">
    <subcellularLocation>
        <location evidence="1">Cytoplasm</location>
    </subcellularLocation>
    <subcellularLocation>
        <location evidence="1">Cell junction</location>
        <location evidence="1">Focal adhesion</location>
    </subcellularLocation>
    <text evidence="1">Detected along actin stress fibers.</text>
</comment>
<comment type="domain">
    <text evidence="1">The N-terminal and the C-terminal halves of the protein can associate with each other, thereby hindering interactions with ZYX.</text>
</comment>
<comment type="similarity">
    <text evidence="4">Belongs to the prickle / espinas / testin family.</text>
</comment>